<proteinExistence type="inferred from homology"/>
<reference key="1">
    <citation type="submission" date="2008-02" db="EMBL/GenBank/DDBJ databases">
        <title>Complete sequence of Yersinia pseudotuberculosis YPIII.</title>
        <authorList>
            <consortium name="US DOE Joint Genome Institute"/>
            <person name="Copeland A."/>
            <person name="Lucas S."/>
            <person name="Lapidus A."/>
            <person name="Glavina del Rio T."/>
            <person name="Dalin E."/>
            <person name="Tice H."/>
            <person name="Bruce D."/>
            <person name="Goodwin L."/>
            <person name="Pitluck S."/>
            <person name="Munk A.C."/>
            <person name="Brettin T."/>
            <person name="Detter J.C."/>
            <person name="Han C."/>
            <person name="Tapia R."/>
            <person name="Schmutz J."/>
            <person name="Larimer F."/>
            <person name="Land M."/>
            <person name="Hauser L."/>
            <person name="Challacombe J.F."/>
            <person name="Green L."/>
            <person name="Lindler L.E."/>
            <person name="Nikolich M.P."/>
            <person name="Richardson P."/>
        </authorList>
    </citation>
    <scope>NUCLEOTIDE SEQUENCE [LARGE SCALE GENOMIC DNA]</scope>
    <source>
        <strain>YPIII</strain>
    </source>
</reference>
<comment type="similarity">
    <text evidence="1">Belongs to the UPF0260 family.</text>
</comment>
<gene>
    <name type="ordered locus">YPK_2117</name>
</gene>
<name>Y2117_YERPY</name>
<organism>
    <name type="scientific">Yersinia pseudotuberculosis serotype O:3 (strain YPIII)</name>
    <dbReference type="NCBI Taxonomy" id="502800"/>
    <lineage>
        <taxon>Bacteria</taxon>
        <taxon>Pseudomonadati</taxon>
        <taxon>Pseudomonadota</taxon>
        <taxon>Gammaproteobacteria</taxon>
        <taxon>Enterobacterales</taxon>
        <taxon>Yersiniaceae</taxon>
        <taxon>Yersinia</taxon>
    </lineage>
</organism>
<evidence type="ECO:0000255" key="1">
    <source>
        <dbReference type="HAMAP-Rule" id="MF_00676"/>
    </source>
</evidence>
<dbReference type="EMBL" id="CP000950">
    <property type="protein sequence ID" value="ACA68403.1"/>
    <property type="molecule type" value="Genomic_DNA"/>
</dbReference>
<dbReference type="RefSeq" id="WP_002211739.1">
    <property type="nucleotide sequence ID" value="NZ_CP009792.1"/>
</dbReference>
<dbReference type="KEGG" id="ypy:YPK_2117"/>
<dbReference type="PATRIC" id="fig|502800.11.peg.2791"/>
<dbReference type="HAMAP" id="MF_00676">
    <property type="entry name" value="UPF0260"/>
    <property type="match status" value="1"/>
</dbReference>
<dbReference type="InterPro" id="IPR005358">
    <property type="entry name" value="Puta_zinc/iron-chelating_dom"/>
</dbReference>
<dbReference type="InterPro" id="IPR008228">
    <property type="entry name" value="UCP006173"/>
</dbReference>
<dbReference type="NCBIfam" id="NF003498">
    <property type="entry name" value="PRK05170.1-1"/>
    <property type="match status" value="1"/>
</dbReference>
<dbReference type="NCBIfam" id="NF003501">
    <property type="entry name" value="PRK05170.1-5"/>
    <property type="match status" value="1"/>
</dbReference>
<dbReference type="NCBIfam" id="NF003507">
    <property type="entry name" value="PRK05170.2-5"/>
    <property type="match status" value="1"/>
</dbReference>
<dbReference type="PANTHER" id="PTHR37421">
    <property type="entry name" value="UPF0260 PROTEIN YCGN"/>
    <property type="match status" value="1"/>
</dbReference>
<dbReference type="PANTHER" id="PTHR37421:SF1">
    <property type="entry name" value="UPF0260 PROTEIN YCGN"/>
    <property type="match status" value="1"/>
</dbReference>
<dbReference type="Pfam" id="PF03692">
    <property type="entry name" value="CxxCxxCC"/>
    <property type="match status" value="1"/>
</dbReference>
<dbReference type="PIRSF" id="PIRSF006173">
    <property type="entry name" value="UCP006173"/>
    <property type="match status" value="1"/>
</dbReference>
<protein>
    <recommendedName>
        <fullName evidence="1">UPF0260 protein YPK_2117</fullName>
    </recommendedName>
</protein>
<sequence>MSQPPFWQQKTLAEMSDSEWESLCDGCGQCCLNKLIDEDTDEIYFTNVACDQLNIKTCQCSNYERRFELEEDCIKLTRENLVTFAWLPPTCAYRLIGEGHDLPRWHPLLTGSKAAMHGERISVRHIAVRESEVVDWQDHILNKPSWAK</sequence>
<accession>B1JLI4</accession>
<feature type="chain" id="PRO_1000131645" description="UPF0260 protein YPK_2117">
    <location>
        <begin position="1"/>
        <end position="148"/>
    </location>
</feature>